<name>RSP4_CHLRE</name>
<accession>Q01656</accession>
<comment type="function">
    <text>Flagellar radial spokes contribute to the regulation of dynein arm activity and thus the pattern of flagellar bending. They consist of a thin stalk, which is attached to the a subfiber of the outer doublet microtubule, and a bulbous head, which is attached to the stalk and appears to interact with the projections from the central pair of microtubules.</text>
</comment>
<comment type="subunit">
    <text>The radial spoke head is made of five different polypeptides (RSP1, RSP4, RSP6, RSP9, and RSP10).</text>
</comment>
<comment type="subcellular location">
    <subcellularLocation>
        <location>Cytoplasm</location>
        <location>Cytoskeleton</location>
        <location>Flagellum axoneme</location>
    </subcellularLocation>
    <text>Radial spoke.</text>
</comment>
<comment type="similarity">
    <text evidence="2">Belongs to the flagellar radial spoke RSP4/6 family.</text>
</comment>
<organism>
    <name type="scientific">Chlamydomonas reinhardtii</name>
    <name type="common">Chlamydomonas smithii</name>
    <dbReference type="NCBI Taxonomy" id="3055"/>
    <lineage>
        <taxon>Eukaryota</taxon>
        <taxon>Viridiplantae</taxon>
        <taxon>Chlorophyta</taxon>
        <taxon>core chlorophytes</taxon>
        <taxon>Chlorophyceae</taxon>
        <taxon>CS clade</taxon>
        <taxon>Chlamydomonadales</taxon>
        <taxon>Chlamydomonadaceae</taxon>
        <taxon>Chlamydomonas</taxon>
    </lineage>
</organism>
<proteinExistence type="evidence at protein level"/>
<dbReference type="EMBL" id="M87526">
    <property type="protein sequence ID" value="AAA33092.1"/>
    <property type="molecule type" value="Genomic_DNA"/>
</dbReference>
<dbReference type="PIR" id="A44498">
    <property type="entry name" value="A44498"/>
</dbReference>
<dbReference type="RefSeq" id="XP_001700728.1">
    <property type="nucleotide sequence ID" value="XM_001700676.1"/>
</dbReference>
<dbReference type="PDB" id="7JR9">
    <property type="method" value="EM"/>
    <property type="resolution" value="2.95 A"/>
    <property type="chains" value="C=1-465"/>
</dbReference>
<dbReference type="PDB" id="7JRJ">
    <property type="method" value="EM"/>
    <property type="resolution" value="3.03 A"/>
    <property type="chains" value="C=1-465"/>
</dbReference>
<dbReference type="PDB" id="7JTK">
    <property type="method" value="EM"/>
    <property type="resolution" value="3.20 A"/>
    <property type="chains" value="G/H=1-465"/>
</dbReference>
<dbReference type="PDBsum" id="7JR9"/>
<dbReference type="PDBsum" id="7JRJ"/>
<dbReference type="PDBsum" id="7JTK"/>
<dbReference type="EMDB" id="EMD-22444"/>
<dbReference type="EMDB" id="EMD-22446"/>
<dbReference type="SMR" id="Q01656"/>
<dbReference type="PaxDb" id="3055-EDP06982"/>
<dbReference type="ProMEX" id="Q01656"/>
<dbReference type="EnsemblPlants" id="PNW83462">
    <property type="protein sequence ID" value="PNW83462"/>
    <property type="gene ID" value="CHLRE_05g242500v5"/>
</dbReference>
<dbReference type="Gramene" id="PNW83462">
    <property type="protein sequence ID" value="PNW83462"/>
    <property type="gene ID" value="CHLRE_05g242500v5"/>
</dbReference>
<dbReference type="KEGG" id="cre:CHLRE_05g242500v5"/>
<dbReference type="eggNOG" id="ENOG502QSU4">
    <property type="taxonomic scope" value="Eukaryota"/>
</dbReference>
<dbReference type="HOGENOM" id="CLU_021526_0_0_1"/>
<dbReference type="OMA" id="CVYFGNG"/>
<dbReference type="OrthoDB" id="272202at2759"/>
<dbReference type="GO" id="GO:0031514">
    <property type="term" value="C:motile cilium"/>
    <property type="evidence" value="ECO:0007669"/>
    <property type="project" value="UniProtKB-KW"/>
</dbReference>
<dbReference type="GO" id="GO:0001534">
    <property type="term" value="C:radial spoke"/>
    <property type="evidence" value="ECO:0000314"/>
    <property type="project" value="UniProtKB"/>
</dbReference>
<dbReference type="GO" id="GO:0001535">
    <property type="term" value="C:radial spoke head"/>
    <property type="evidence" value="ECO:0000304"/>
    <property type="project" value="MGI"/>
</dbReference>
<dbReference type="GO" id="GO:0060271">
    <property type="term" value="P:cilium assembly"/>
    <property type="evidence" value="ECO:0007669"/>
    <property type="project" value="InterPro"/>
</dbReference>
<dbReference type="GO" id="GO:0060294">
    <property type="term" value="P:cilium movement involved in cell motility"/>
    <property type="evidence" value="ECO:0007669"/>
    <property type="project" value="InterPro"/>
</dbReference>
<dbReference type="CDD" id="cd22963">
    <property type="entry name" value="DD_CrRSP4-like"/>
    <property type="match status" value="1"/>
</dbReference>
<dbReference type="InterPro" id="IPR006802">
    <property type="entry name" value="Radial_spoke"/>
</dbReference>
<dbReference type="PANTHER" id="PTHR13159:SF0">
    <property type="entry name" value="RADIAL SPOKE HEAD 6 HOMOLOG A"/>
    <property type="match status" value="1"/>
</dbReference>
<dbReference type="PANTHER" id="PTHR13159">
    <property type="entry name" value="RADIAL SPOKEHEAD-RELATED"/>
    <property type="match status" value="1"/>
</dbReference>
<dbReference type="Pfam" id="PF04712">
    <property type="entry name" value="Radial_spoke"/>
    <property type="match status" value="1"/>
</dbReference>
<reference key="1">
    <citation type="journal article" date="1992" name="Mol. Cell. Biol.">
        <title>Sequence analysis reveals homology between two proteins of the flagellar radial spoke.</title>
        <authorList>
            <person name="Curry A.M."/>
            <person name="Williams B.D."/>
            <person name="Rosenbaum J.L."/>
        </authorList>
    </citation>
    <scope>NUCLEOTIDE SEQUENCE [GENOMIC DNA]</scope>
    <source>
        <strain>21gr / CC-1690</strain>
    </source>
</reference>
<keyword id="KW-0002">3D-structure</keyword>
<keyword id="KW-0966">Cell projection</keyword>
<keyword id="KW-0969">Cilium</keyword>
<keyword id="KW-0970">Cilium biogenesis/degradation</keyword>
<keyword id="KW-0963">Cytoplasm</keyword>
<keyword id="KW-0206">Cytoskeleton</keyword>
<keyword id="KW-0282">Flagellum</keyword>
<evidence type="ECO:0000256" key="1">
    <source>
        <dbReference type="SAM" id="MobiDB-lite"/>
    </source>
</evidence>
<evidence type="ECO:0000305" key="2"/>
<evidence type="ECO:0007829" key="3">
    <source>
        <dbReference type="PDB" id="7JR9"/>
    </source>
</evidence>
<evidence type="ECO:0007829" key="4">
    <source>
        <dbReference type="PDB" id="7JRJ"/>
    </source>
</evidence>
<evidence type="ECO:0007829" key="5">
    <source>
        <dbReference type="PDB" id="7JTK"/>
    </source>
</evidence>
<protein>
    <recommendedName>
        <fullName>Flagellar radial spoke protein 4</fullName>
    </recommendedName>
</protein>
<gene>
    <name type="primary">RSP4</name>
</gene>
<sequence length="465" mass="49798">MAAVDSVAQALAYLQVHSPQDGTSMYDHLVKLVSKVLEDQPKNAVDLLETSLLVKKSTFDPKESSPLVPIPVAPDATQTQAAVSIFGDPELPINPATGEPVPADPPNEFEAENMLGAAAVLDCLGVGLGRELGVNIALAAKRIGEDPKLAVRSVRFFGKFLGLYSDYFVFEVAFKKEAAKEAAPAAPAPERVEGEAASSSAPEVPVEEPGKGANKFTYLVCSSLGGPLTRLPDVTPAQVKASRRIKKLLTGRLTSHVSTYPAFPGNEANYLRALIARISAATVVAPSDLFSLNDETGELERAEDWEPPAGREMAAPTAWVHVRPHLKSQGRCEVHKRELPEDADEDEFYNEDELEEGPDLLAALEEDAQLPGEQAAWTPIYSSASEAVKTQAGGLRSLVWPGAVCGGRGSEWTCVYVGWGVKNAPFVPLPPPPVAQEFAWGEVETQELELKPAPPPPEEEAEADE</sequence>
<feature type="chain" id="PRO_0000097494" description="Flagellar radial spoke protein 4">
    <location>
        <begin position="1"/>
        <end position="465"/>
    </location>
</feature>
<feature type="region of interest" description="Disordered" evidence="1">
    <location>
        <begin position="184"/>
        <end position="209"/>
    </location>
</feature>
<feature type="region of interest" description="Disordered" evidence="1">
    <location>
        <begin position="445"/>
        <end position="465"/>
    </location>
</feature>
<feature type="helix" evidence="4">
    <location>
        <begin position="8"/>
        <end position="14"/>
    </location>
</feature>
<feature type="strand" evidence="4">
    <location>
        <begin position="19"/>
        <end position="23"/>
    </location>
</feature>
<feature type="helix" evidence="4">
    <location>
        <begin position="25"/>
        <end position="39"/>
    </location>
</feature>
<feature type="helix" evidence="4">
    <location>
        <begin position="47"/>
        <end position="55"/>
    </location>
</feature>
<feature type="helix" evidence="3">
    <location>
        <begin position="77"/>
        <end position="84"/>
    </location>
</feature>
<feature type="strand" evidence="5">
    <location>
        <begin position="95"/>
        <end position="100"/>
    </location>
</feature>
<feature type="helix" evidence="3">
    <location>
        <begin position="114"/>
        <end position="124"/>
    </location>
</feature>
<feature type="helix" evidence="3">
    <location>
        <begin position="131"/>
        <end position="144"/>
    </location>
</feature>
<feature type="strand" evidence="3">
    <location>
        <begin position="147"/>
        <end position="149"/>
    </location>
</feature>
<feature type="strand" evidence="3">
    <location>
        <begin position="152"/>
        <end position="160"/>
    </location>
</feature>
<feature type="strand" evidence="3">
    <location>
        <begin position="167"/>
        <end position="172"/>
    </location>
</feature>
<feature type="helix" evidence="3">
    <location>
        <begin position="212"/>
        <end position="214"/>
    </location>
</feature>
<feature type="strand" evidence="3">
    <location>
        <begin position="215"/>
        <end position="223"/>
    </location>
</feature>
<feature type="helix" evidence="3">
    <location>
        <begin position="236"/>
        <end position="244"/>
    </location>
</feature>
<feature type="strand" evidence="5">
    <location>
        <begin position="251"/>
        <end position="254"/>
    </location>
</feature>
<feature type="turn" evidence="3">
    <location>
        <begin position="259"/>
        <end position="262"/>
    </location>
</feature>
<feature type="strand" evidence="5">
    <location>
        <begin position="264"/>
        <end position="266"/>
    </location>
</feature>
<feature type="helix" evidence="3">
    <location>
        <begin position="267"/>
        <end position="282"/>
    </location>
</feature>
<feature type="strand" evidence="3">
    <location>
        <begin position="284"/>
        <end position="286"/>
    </location>
</feature>
<feature type="strand" evidence="3">
    <location>
        <begin position="289"/>
        <end position="292"/>
    </location>
</feature>
<feature type="turn" evidence="3">
    <location>
        <begin position="294"/>
        <end position="296"/>
    </location>
</feature>
<feature type="strand" evidence="3">
    <location>
        <begin position="299"/>
        <end position="301"/>
    </location>
</feature>
<feature type="helix" evidence="3">
    <location>
        <begin position="311"/>
        <end position="314"/>
    </location>
</feature>
<feature type="strand" evidence="3">
    <location>
        <begin position="318"/>
        <end position="321"/>
    </location>
</feature>
<feature type="strand" evidence="5">
    <location>
        <begin position="330"/>
        <end position="333"/>
    </location>
</feature>
<feature type="strand" evidence="5">
    <location>
        <begin position="341"/>
        <end position="343"/>
    </location>
</feature>
<feature type="turn" evidence="5">
    <location>
        <begin position="345"/>
        <end position="348"/>
    </location>
</feature>
<feature type="turn" evidence="5">
    <location>
        <begin position="351"/>
        <end position="353"/>
    </location>
</feature>
<feature type="strand" evidence="3">
    <location>
        <begin position="363"/>
        <end position="367"/>
    </location>
</feature>
<feature type="turn" evidence="3">
    <location>
        <begin position="371"/>
        <end position="373"/>
    </location>
</feature>
<feature type="strand" evidence="3">
    <location>
        <begin position="376"/>
        <end position="382"/>
    </location>
</feature>
<feature type="strand" evidence="5">
    <location>
        <begin position="388"/>
        <end position="390"/>
    </location>
</feature>
<feature type="strand" evidence="3">
    <location>
        <begin position="392"/>
        <end position="400"/>
    </location>
</feature>
<feature type="strand" evidence="3">
    <location>
        <begin position="403"/>
        <end position="408"/>
    </location>
</feature>
<feature type="strand" evidence="3">
    <location>
        <begin position="411"/>
        <end position="418"/>
    </location>
</feature>
<feature type="helix" evidence="4">
    <location>
        <begin position="440"/>
        <end position="442"/>
    </location>
</feature>